<evidence type="ECO:0000255" key="1">
    <source>
        <dbReference type="HAMAP-Rule" id="MF_01699"/>
    </source>
</evidence>
<dbReference type="EC" id="1.14.99.46" evidence="1"/>
<dbReference type="EMBL" id="CP001969">
    <property type="protein sequence ID" value="ADE91825.1"/>
    <property type="molecule type" value="Genomic_DNA"/>
</dbReference>
<dbReference type="SMR" id="D5CZH2"/>
<dbReference type="KEGG" id="eih:ECOK1_1064"/>
<dbReference type="PATRIC" id="fig|714962.3.peg.1078"/>
<dbReference type="HOGENOM" id="CLU_027853_1_1_6"/>
<dbReference type="GO" id="GO:0008726">
    <property type="term" value="F:alkanesulfonate monooxygenase activity"/>
    <property type="evidence" value="ECO:0007669"/>
    <property type="project" value="TreeGrafter"/>
</dbReference>
<dbReference type="GO" id="GO:0052614">
    <property type="term" value="F:uracil oxygenase activity"/>
    <property type="evidence" value="ECO:0007669"/>
    <property type="project" value="UniProtKB-EC"/>
</dbReference>
<dbReference type="GO" id="GO:0046306">
    <property type="term" value="P:alkanesulfonate catabolic process"/>
    <property type="evidence" value="ECO:0007669"/>
    <property type="project" value="TreeGrafter"/>
</dbReference>
<dbReference type="GO" id="GO:0019740">
    <property type="term" value="P:nitrogen utilization"/>
    <property type="evidence" value="ECO:0007669"/>
    <property type="project" value="UniProtKB-UniRule"/>
</dbReference>
<dbReference type="GO" id="GO:0006212">
    <property type="term" value="P:uracil catabolic process"/>
    <property type="evidence" value="ECO:0007669"/>
    <property type="project" value="UniProtKB-UniRule"/>
</dbReference>
<dbReference type="CDD" id="cd01094">
    <property type="entry name" value="Alkanesulfonate_monoxygenase"/>
    <property type="match status" value="1"/>
</dbReference>
<dbReference type="FunFam" id="3.20.20.30:FF:000003">
    <property type="entry name" value="Pyrimidine monooxygenase RutA"/>
    <property type="match status" value="1"/>
</dbReference>
<dbReference type="Gene3D" id="3.20.20.30">
    <property type="entry name" value="Luciferase-like domain"/>
    <property type="match status" value="1"/>
</dbReference>
<dbReference type="HAMAP" id="MF_01699">
    <property type="entry name" value="RutA"/>
    <property type="match status" value="1"/>
</dbReference>
<dbReference type="InterPro" id="IPR011251">
    <property type="entry name" value="Luciferase-like_dom"/>
</dbReference>
<dbReference type="InterPro" id="IPR036661">
    <property type="entry name" value="Luciferase-like_sf"/>
</dbReference>
<dbReference type="InterPro" id="IPR019914">
    <property type="entry name" value="Pyrimidine_monooxygenase_RutA"/>
</dbReference>
<dbReference type="InterPro" id="IPR050172">
    <property type="entry name" value="SsuD_RutA_monooxygenase"/>
</dbReference>
<dbReference type="NCBIfam" id="TIGR03612">
    <property type="entry name" value="RutA"/>
    <property type="match status" value="1"/>
</dbReference>
<dbReference type="PANTHER" id="PTHR42847">
    <property type="entry name" value="ALKANESULFONATE MONOOXYGENASE"/>
    <property type="match status" value="1"/>
</dbReference>
<dbReference type="PANTHER" id="PTHR42847:SF4">
    <property type="entry name" value="ALKANESULFONATE MONOOXYGENASE-RELATED"/>
    <property type="match status" value="1"/>
</dbReference>
<dbReference type="Pfam" id="PF00296">
    <property type="entry name" value="Bac_luciferase"/>
    <property type="match status" value="1"/>
</dbReference>
<dbReference type="SUPFAM" id="SSF51679">
    <property type="entry name" value="Bacterial luciferase-like"/>
    <property type="match status" value="1"/>
</dbReference>
<protein>
    <recommendedName>
        <fullName evidence="1">Pyrimidine monooxygenase RutA</fullName>
        <ecNumber evidence="1">1.14.99.46</ecNumber>
    </recommendedName>
</protein>
<gene>
    <name evidence="1" type="primary">rutA</name>
    <name type="ordered locus">ECOK1_1064</name>
</gene>
<proteinExistence type="inferred from homology"/>
<comment type="function">
    <text evidence="1">Catalyzes the pyrimidine ring opening between N-3 and C-4 by an unusual flavin hydroperoxide-catalyzed mechanism, adding oxygen atoms in the process to yield ureidoacrylate peracid, that immediately reacts with FMN forming ureidoacrylate and FMN-N(5)-oxide. The FMN-N(5)-oxide reacts spontaneously with NADH to produce FMN. Requires the flavin reductase RutF to regenerate FMN in vivo.</text>
</comment>
<comment type="catalytic activity">
    <reaction evidence="1">
        <text>uracil + FMNH2 + NADH + O2 = (Z)-3-ureidoacrylate + FMN + NAD(+) + H2O + H(+)</text>
        <dbReference type="Rhea" id="RHEA:31587"/>
        <dbReference type="ChEBI" id="CHEBI:15377"/>
        <dbReference type="ChEBI" id="CHEBI:15378"/>
        <dbReference type="ChEBI" id="CHEBI:15379"/>
        <dbReference type="ChEBI" id="CHEBI:17568"/>
        <dbReference type="ChEBI" id="CHEBI:57540"/>
        <dbReference type="ChEBI" id="CHEBI:57618"/>
        <dbReference type="ChEBI" id="CHEBI:57945"/>
        <dbReference type="ChEBI" id="CHEBI:58210"/>
        <dbReference type="ChEBI" id="CHEBI:59891"/>
        <dbReference type="EC" id="1.14.99.46"/>
    </reaction>
</comment>
<comment type="catalytic activity">
    <reaction evidence="1">
        <text>thymine + FMNH2 + NADH + O2 = (Z)-2-methylureidoacrylate + FMN + NAD(+) + H2O + H(+)</text>
        <dbReference type="Rhea" id="RHEA:31599"/>
        <dbReference type="ChEBI" id="CHEBI:15377"/>
        <dbReference type="ChEBI" id="CHEBI:15378"/>
        <dbReference type="ChEBI" id="CHEBI:15379"/>
        <dbReference type="ChEBI" id="CHEBI:17821"/>
        <dbReference type="ChEBI" id="CHEBI:57540"/>
        <dbReference type="ChEBI" id="CHEBI:57618"/>
        <dbReference type="ChEBI" id="CHEBI:57945"/>
        <dbReference type="ChEBI" id="CHEBI:58210"/>
        <dbReference type="ChEBI" id="CHEBI:143783"/>
        <dbReference type="EC" id="1.14.99.46"/>
    </reaction>
</comment>
<comment type="induction">
    <text evidence="1">Up-regulated by the nitrogen regulatory protein C (NtrC also called GlnG) and repressed by RutR.</text>
</comment>
<comment type="similarity">
    <text evidence="1">Belongs to the NtaA/SnaA/DszA monooxygenase family. RutA subfamily.</text>
</comment>
<name>RUTA_ECOKI</name>
<reference key="1">
    <citation type="journal article" date="2010" name="Proc. Natl. Acad. Sci. U.S.A.">
        <title>Identification of protective and broadly conserved vaccine antigens from the genome of extraintestinal pathogenic Escherichia coli.</title>
        <authorList>
            <person name="Moriel D.G."/>
            <person name="Bertoldi I."/>
            <person name="Spagnuolo A."/>
            <person name="Marchi S."/>
            <person name="Rosini R."/>
            <person name="Nesta B."/>
            <person name="Pastorello I."/>
            <person name="Corea V.A."/>
            <person name="Torricelli G."/>
            <person name="Cartocci E."/>
            <person name="Savino S."/>
            <person name="Scarselli M."/>
            <person name="Dobrindt U."/>
            <person name="Hacker J."/>
            <person name="Tettelin H."/>
            <person name="Tallon L.J."/>
            <person name="Sullivan S."/>
            <person name="Wieler L.H."/>
            <person name="Ewers C."/>
            <person name="Pickard D."/>
            <person name="Dougan G."/>
            <person name="Fontana M.R."/>
            <person name="Rappuoli R."/>
            <person name="Pizza M."/>
            <person name="Serino L."/>
        </authorList>
    </citation>
    <scope>NUCLEOTIDE SEQUENCE [LARGE SCALE GENOMIC DNA]</scope>
    <source>
        <strain>IHE3034 / ExPEC</strain>
    </source>
</reference>
<accession>D5CZH2</accession>
<sequence>MQTSHYAAEKDMQDAAPRLTFTLRDEERLMMKIGVFVPIGNNGWLISTHAPQYMPTFELNKAIVQKAEHYHFDFALSMIKLRGFGGKTEFWDHNLESFTLMAGLAAVTSRIQIYATAATLTLPPAIVARMAATIDSISGGRFGVNLVTGWQKPEYEQMGIWPGDDYFSRRYDYLTEYVQVLRDLWGSGKSDFKGDFFTMDDCRVSPQPSVPMKVICAGQSDAGMAFSARYADFNFCFGKGVNTPTAFAPTAARMKQAAEQTGRDVGSYVLFMVIADETDDAARAKWEHYKAGADEEALSWLTEQSQKDTRSGTDTNVRQMADPTSAVNINMGTLVGSYASVARMLDEVASVPGAEGVLLTFDDFLSGIENFGERIQPLMQCRAHLPALTQEVA</sequence>
<feature type="chain" id="PRO_0000402612" description="Pyrimidine monooxygenase RutA">
    <location>
        <begin position="1"/>
        <end position="393"/>
    </location>
</feature>
<feature type="binding site" evidence="1">
    <location>
        <begin position="79"/>
        <end position="80"/>
    </location>
    <ligand>
        <name>FMN</name>
        <dbReference type="ChEBI" id="CHEBI:58210"/>
    </ligand>
</feature>
<feature type="binding site" evidence="1">
    <location>
        <position position="145"/>
    </location>
    <ligand>
        <name>FMN</name>
        <dbReference type="ChEBI" id="CHEBI:58210"/>
    </ligand>
</feature>
<feature type="binding site" evidence="1">
    <location>
        <position position="154"/>
    </location>
    <ligand>
        <name>FMN</name>
        <dbReference type="ChEBI" id="CHEBI:58210"/>
    </ligand>
</feature>
<feature type="binding site" evidence="1">
    <location>
        <begin position="170"/>
        <end position="171"/>
    </location>
    <ligand>
        <name>FMN</name>
        <dbReference type="ChEBI" id="CHEBI:58210"/>
    </ligand>
</feature>
<feature type="binding site" evidence="1">
    <location>
        <position position="220"/>
    </location>
    <ligand>
        <name>FMN</name>
        <dbReference type="ChEBI" id="CHEBI:58210"/>
    </ligand>
</feature>
<keyword id="KW-0285">Flavoprotein</keyword>
<keyword id="KW-0288">FMN</keyword>
<keyword id="KW-0503">Monooxygenase</keyword>
<keyword id="KW-0521">NADP</keyword>
<keyword id="KW-0560">Oxidoreductase</keyword>
<organism>
    <name type="scientific">Escherichia coli O18:K1:H7 (strain IHE3034 / ExPEC)</name>
    <dbReference type="NCBI Taxonomy" id="714962"/>
    <lineage>
        <taxon>Bacteria</taxon>
        <taxon>Pseudomonadati</taxon>
        <taxon>Pseudomonadota</taxon>
        <taxon>Gammaproteobacteria</taxon>
        <taxon>Enterobacterales</taxon>
        <taxon>Enterobacteriaceae</taxon>
        <taxon>Escherichia</taxon>
    </lineage>
</organism>